<feature type="chain" id="PRO_0000199792" description="Acetyl-coenzyme A carboxylase carboxyl transferase subunit beta, chloroplastic">
    <location>
        <begin position="1"/>
        <end position="321"/>
    </location>
</feature>
<feature type="domain" description="CoA carboxyltransferase N-terminal" evidence="3">
    <location>
        <begin position="47"/>
        <end position="321"/>
    </location>
</feature>
<feature type="zinc finger region" description="C4-type" evidence="2">
    <location>
        <begin position="51"/>
        <end position="73"/>
    </location>
</feature>
<feature type="binding site" evidence="2">
    <location>
        <position position="51"/>
    </location>
    <ligand>
        <name>Zn(2+)</name>
        <dbReference type="ChEBI" id="CHEBI:29105"/>
    </ligand>
</feature>
<feature type="binding site" evidence="2">
    <location>
        <position position="54"/>
    </location>
    <ligand>
        <name>Zn(2+)</name>
        <dbReference type="ChEBI" id="CHEBI:29105"/>
    </ligand>
</feature>
<feature type="binding site" evidence="2">
    <location>
        <position position="70"/>
    </location>
    <ligand>
        <name>Zn(2+)</name>
        <dbReference type="ChEBI" id="CHEBI:29105"/>
    </ligand>
</feature>
<feature type="binding site" evidence="2">
    <location>
        <position position="73"/>
    </location>
    <ligand>
        <name>Zn(2+)</name>
        <dbReference type="ChEBI" id="CHEBI:29105"/>
    </ligand>
</feature>
<sequence length="321" mass="36403">MSIKEWFEDKRKITALLKNSVERDSKDANETEKNKNKSIDYAKIKKLWAQCDNCENLLYLRFLRENQSVCKECGYYLQMNSSDRIELLIDRDTWRPMDEDMYTLDVLQFYSENEPSHSDNLNSEDESYKDHITFYQIETGLTDAIQTGIGQLNGLTIALGVMDFQFMGGSMGSVVGEKITRLIERATAESLPLIMVCASGGARMQEGSFSLMQMAKIASALYIHQKEKKLLYISILTSPTTGGVTASFGMLGDIIIAEPKAYIAFAGKRVIEQTLGQKVIEDFQVTEHLFGHGLFDLIVPRNLLKGVLSELFWFYVLRSSL</sequence>
<organism>
    <name type="scientific">Pinus thunbergii</name>
    <name type="common">Japanese black pine</name>
    <name type="synonym">Pinus thunbergiana</name>
    <dbReference type="NCBI Taxonomy" id="3350"/>
    <lineage>
        <taxon>Eukaryota</taxon>
        <taxon>Viridiplantae</taxon>
        <taxon>Streptophyta</taxon>
        <taxon>Embryophyta</taxon>
        <taxon>Tracheophyta</taxon>
        <taxon>Spermatophyta</taxon>
        <taxon>Pinopsida</taxon>
        <taxon>Pinidae</taxon>
        <taxon>Conifers I</taxon>
        <taxon>Pinales</taxon>
        <taxon>Pinaceae</taxon>
        <taxon>Pinus</taxon>
        <taxon>Pinus subgen. Pinus</taxon>
    </lineage>
</organism>
<proteinExistence type="evidence at transcript level"/>
<protein>
    <recommendedName>
        <fullName evidence="2">Acetyl-coenzyme A carboxylase carboxyl transferase subunit beta, chloroplastic</fullName>
        <shortName evidence="2">ACCase subunit beta</shortName>
        <shortName evidence="2">Acetyl-CoA carboxylase carboxyltransferase subunit beta</shortName>
        <ecNumber evidence="2">2.1.3.15</ecNumber>
    </recommendedName>
</protein>
<keyword id="KW-0067">ATP-binding</keyword>
<keyword id="KW-0150">Chloroplast</keyword>
<keyword id="KW-0275">Fatty acid biosynthesis</keyword>
<keyword id="KW-0276">Fatty acid metabolism</keyword>
<keyword id="KW-0444">Lipid biosynthesis</keyword>
<keyword id="KW-0443">Lipid metabolism</keyword>
<keyword id="KW-0479">Metal-binding</keyword>
<keyword id="KW-0547">Nucleotide-binding</keyword>
<keyword id="KW-0934">Plastid</keyword>
<keyword id="KW-0691">RNA editing</keyword>
<keyword id="KW-0808">Transferase</keyword>
<keyword id="KW-0862">Zinc</keyword>
<keyword id="KW-0863">Zinc-finger</keyword>
<evidence type="ECO:0000250" key="1"/>
<evidence type="ECO:0000255" key="2">
    <source>
        <dbReference type="HAMAP-Rule" id="MF_01395"/>
    </source>
</evidence>
<evidence type="ECO:0000255" key="3">
    <source>
        <dbReference type="PROSITE-ProRule" id="PRU01136"/>
    </source>
</evidence>
<evidence type="ECO:0000269" key="4">
    <source>
    </source>
</evidence>
<accession>P52769</accession>
<name>ACCD_PINTH</name>
<comment type="function">
    <text evidence="2">Component of the acetyl coenzyme A carboxylase (ACC) complex. Biotin carboxylase (BC) catalyzes the carboxylation of biotin on its carrier protein (BCCP) and then the CO(2) group is transferred by the transcarboxylase to acetyl-CoA to form malonyl-CoA.</text>
</comment>
<comment type="catalytic activity">
    <reaction evidence="2">
        <text>N(6)-carboxybiotinyl-L-lysyl-[protein] + acetyl-CoA = N(6)-biotinyl-L-lysyl-[protein] + malonyl-CoA</text>
        <dbReference type="Rhea" id="RHEA:54728"/>
        <dbReference type="Rhea" id="RHEA-COMP:10505"/>
        <dbReference type="Rhea" id="RHEA-COMP:10506"/>
        <dbReference type="ChEBI" id="CHEBI:57288"/>
        <dbReference type="ChEBI" id="CHEBI:57384"/>
        <dbReference type="ChEBI" id="CHEBI:83144"/>
        <dbReference type="ChEBI" id="CHEBI:83145"/>
        <dbReference type="EC" id="2.1.3.15"/>
    </reaction>
</comment>
<comment type="cofactor">
    <cofactor evidence="2">
        <name>Zn(2+)</name>
        <dbReference type="ChEBI" id="CHEBI:29105"/>
    </cofactor>
    <text evidence="2">Binds 1 zinc ion per subunit.</text>
</comment>
<comment type="pathway">
    <text evidence="2">Lipid metabolism; malonyl-CoA biosynthesis; malonyl-CoA from acetyl-CoA: step 1/1.</text>
</comment>
<comment type="subunit">
    <text evidence="1">Acetyl-CoA carboxylase is a heterohexamer composed of biotin carboxyl carrier protein, biotin carboxylase and 2 subunits each of ACCase subunit alpha and ACCase plastid-coded subunit beta (accD).</text>
</comment>
<comment type="subcellular location">
    <subcellularLocation>
        <location evidence="2">Plastid</location>
        <location evidence="2">Chloroplast stroma</location>
    </subcellularLocation>
</comment>
<comment type="RNA editing">
    <location>
        <position position="88" evidence="4"/>
    </location>
</comment>
<comment type="similarity">
    <text evidence="2">Belongs to the AccD/PCCB family.</text>
</comment>
<geneLocation type="chloroplast"/>
<gene>
    <name evidence="2" type="primary">accD</name>
</gene>
<reference key="1">
    <citation type="journal article" date="1994" name="Proc. Natl. Acad. Sci. U.S.A.">
        <title>Loss of all ndh genes as determined by sequencing the entire chloroplast genome of the black pine Pinus thunbergii.</title>
        <authorList>
            <person name="Wakasugi T."/>
            <person name="Tsudzuki J."/>
            <person name="Ito S."/>
            <person name="Nakashima K."/>
            <person name="Tsudzuki T."/>
            <person name="Sugiura M."/>
        </authorList>
    </citation>
    <scope>NUCLEOTIDE SEQUENCE [LARGE SCALE GENOMIC DNA]</scope>
</reference>
<reference key="2">
    <citation type="journal article" date="2001" name="J. Biol. Chem.">
        <title>Chloroplast RNA editing required for functional acetyl-CoA carboxylase in plants.</title>
        <authorList>
            <person name="Sasaki Y."/>
            <person name="Kozaki A."/>
            <person name="Ohmori A."/>
            <person name="Iguchi H."/>
            <person name="Nagano Y."/>
        </authorList>
    </citation>
    <scope>RNA EDITING</scope>
</reference>
<dbReference type="EC" id="2.1.3.15" evidence="2"/>
<dbReference type="EMBL" id="D17510">
    <property type="protein sequence ID" value="BAA04367.1"/>
    <property type="molecule type" value="Genomic_DNA"/>
</dbReference>
<dbReference type="PIR" id="T07489">
    <property type="entry name" value="T07489"/>
</dbReference>
<dbReference type="RefSeq" id="NP_042410.1">
    <property type="nucleotide sequence ID" value="NC_001631.1"/>
</dbReference>
<dbReference type="SMR" id="P52769"/>
<dbReference type="GeneID" id="809073"/>
<dbReference type="UniPathway" id="UPA00655">
    <property type="reaction ID" value="UER00711"/>
</dbReference>
<dbReference type="GO" id="GO:0009317">
    <property type="term" value="C:acetyl-CoA carboxylase complex"/>
    <property type="evidence" value="ECO:0007669"/>
    <property type="project" value="InterPro"/>
</dbReference>
<dbReference type="GO" id="GO:0009570">
    <property type="term" value="C:chloroplast stroma"/>
    <property type="evidence" value="ECO:0007669"/>
    <property type="project" value="UniProtKB-SubCell"/>
</dbReference>
<dbReference type="GO" id="GO:0003989">
    <property type="term" value="F:acetyl-CoA carboxylase activity"/>
    <property type="evidence" value="ECO:0007669"/>
    <property type="project" value="InterPro"/>
</dbReference>
<dbReference type="GO" id="GO:0005524">
    <property type="term" value="F:ATP binding"/>
    <property type="evidence" value="ECO:0007669"/>
    <property type="project" value="UniProtKB-KW"/>
</dbReference>
<dbReference type="GO" id="GO:0016743">
    <property type="term" value="F:carboxyl- or carbamoyltransferase activity"/>
    <property type="evidence" value="ECO:0007669"/>
    <property type="project" value="UniProtKB-UniRule"/>
</dbReference>
<dbReference type="GO" id="GO:0008270">
    <property type="term" value="F:zinc ion binding"/>
    <property type="evidence" value="ECO:0007669"/>
    <property type="project" value="UniProtKB-UniRule"/>
</dbReference>
<dbReference type="GO" id="GO:0006633">
    <property type="term" value="P:fatty acid biosynthetic process"/>
    <property type="evidence" value="ECO:0007669"/>
    <property type="project" value="UniProtKB-KW"/>
</dbReference>
<dbReference type="GO" id="GO:2001295">
    <property type="term" value="P:malonyl-CoA biosynthetic process"/>
    <property type="evidence" value="ECO:0007669"/>
    <property type="project" value="UniProtKB-UniRule"/>
</dbReference>
<dbReference type="Gene3D" id="3.90.226.10">
    <property type="entry name" value="2-enoyl-CoA Hydratase, Chain A, domain 1"/>
    <property type="match status" value="1"/>
</dbReference>
<dbReference type="HAMAP" id="MF_01395">
    <property type="entry name" value="AcetylCoA_CT_beta"/>
    <property type="match status" value="1"/>
</dbReference>
<dbReference type="InterPro" id="IPR034733">
    <property type="entry name" value="AcCoA_carboxyl_beta"/>
</dbReference>
<dbReference type="InterPro" id="IPR000438">
    <property type="entry name" value="Acetyl_CoA_COase_Trfase_b_su"/>
</dbReference>
<dbReference type="InterPro" id="IPR029045">
    <property type="entry name" value="ClpP/crotonase-like_dom_sf"/>
</dbReference>
<dbReference type="InterPro" id="IPR011762">
    <property type="entry name" value="COA_CT_N"/>
</dbReference>
<dbReference type="NCBIfam" id="TIGR00515">
    <property type="entry name" value="accD"/>
    <property type="match status" value="1"/>
</dbReference>
<dbReference type="PANTHER" id="PTHR42995">
    <property type="entry name" value="ACETYL-COENZYME A CARBOXYLASE CARBOXYL TRANSFERASE SUBUNIT BETA, CHLOROPLASTIC"/>
    <property type="match status" value="1"/>
</dbReference>
<dbReference type="PANTHER" id="PTHR42995:SF5">
    <property type="entry name" value="ACETYL-COENZYME A CARBOXYLASE CARBOXYL TRANSFERASE SUBUNIT BETA, CHLOROPLASTIC"/>
    <property type="match status" value="1"/>
</dbReference>
<dbReference type="Pfam" id="PF01039">
    <property type="entry name" value="Carboxyl_trans"/>
    <property type="match status" value="1"/>
</dbReference>
<dbReference type="PRINTS" id="PR01070">
    <property type="entry name" value="ACCCTRFRASEB"/>
</dbReference>
<dbReference type="SUPFAM" id="SSF52096">
    <property type="entry name" value="ClpP/crotonase"/>
    <property type="match status" value="1"/>
</dbReference>
<dbReference type="PROSITE" id="PS50980">
    <property type="entry name" value="COA_CT_NTER"/>
    <property type="match status" value="1"/>
</dbReference>